<gene>
    <name evidence="1" type="primary">asnS</name>
    <name type="ordered locus">CGSHiEE_05165</name>
</gene>
<accession>A5UCB9</accession>
<proteinExistence type="inferred from homology"/>
<organism>
    <name type="scientific">Haemophilus influenzae (strain PittEE)</name>
    <dbReference type="NCBI Taxonomy" id="374930"/>
    <lineage>
        <taxon>Bacteria</taxon>
        <taxon>Pseudomonadati</taxon>
        <taxon>Pseudomonadota</taxon>
        <taxon>Gammaproteobacteria</taxon>
        <taxon>Pasteurellales</taxon>
        <taxon>Pasteurellaceae</taxon>
        <taxon>Haemophilus</taxon>
    </lineage>
</organism>
<keyword id="KW-0030">Aminoacyl-tRNA synthetase</keyword>
<keyword id="KW-0067">ATP-binding</keyword>
<keyword id="KW-0963">Cytoplasm</keyword>
<keyword id="KW-0436">Ligase</keyword>
<keyword id="KW-0547">Nucleotide-binding</keyword>
<keyword id="KW-0648">Protein biosynthesis</keyword>
<dbReference type="EC" id="6.1.1.22" evidence="1"/>
<dbReference type="EMBL" id="CP000671">
    <property type="protein sequence ID" value="ABQ98420.1"/>
    <property type="molecule type" value="Genomic_DNA"/>
</dbReference>
<dbReference type="SMR" id="A5UCB9"/>
<dbReference type="KEGG" id="hip:CGSHiEE_05165"/>
<dbReference type="HOGENOM" id="CLU_004553_2_0_6"/>
<dbReference type="GO" id="GO:0005737">
    <property type="term" value="C:cytoplasm"/>
    <property type="evidence" value="ECO:0007669"/>
    <property type="project" value="UniProtKB-SubCell"/>
</dbReference>
<dbReference type="GO" id="GO:0004816">
    <property type="term" value="F:asparagine-tRNA ligase activity"/>
    <property type="evidence" value="ECO:0007669"/>
    <property type="project" value="UniProtKB-UniRule"/>
</dbReference>
<dbReference type="GO" id="GO:0005524">
    <property type="term" value="F:ATP binding"/>
    <property type="evidence" value="ECO:0007669"/>
    <property type="project" value="UniProtKB-UniRule"/>
</dbReference>
<dbReference type="GO" id="GO:0003676">
    <property type="term" value="F:nucleic acid binding"/>
    <property type="evidence" value="ECO:0007669"/>
    <property type="project" value="InterPro"/>
</dbReference>
<dbReference type="GO" id="GO:0006421">
    <property type="term" value="P:asparaginyl-tRNA aminoacylation"/>
    <property type="evidence" value="ECO:0007669"/>
    <property type="project" value="UniProtKB-UniRule"/>
</dbReference>
<dbReference type="CDD" id="cd00776">
    <property type="entry name" value="AsxRS_core"/>
    <property type="match status" value="1"/>
</dbReference>
<dbReference type="CDD" id="cd04318">
    <property type="entry name" value="EcAsnRS_like_N"/>
    <property type="match status" value="1"/>
</dbReference>
<dbReference type="FunFam" id="3.30.930.10:FF:000016">
    <property type="entry name" value="Asparagine--tRNA ligase"/>
    <property type="match status" value="1"/>
</dbReference>
<dbReference type="Gene3D" id="3.30.930.10">
    <property type="entry name" value="Bira Bifunctional Protein, Domain 2"/>
    <property type="match status" value="1"/>
</dbReference>
<dbReference type="Gene3D" id="2.40.50.140">
    <property type="entry name" value="Nucleic acid-binding proteins"/>
    <property type="match status" value="1"/>
</dbReference>
<dbReference type="HAMAP" id="MF_00534">
    <property type="entry name" value="Asn_tRNA_synth"/>
    <property type="match status" value="1"/>
</dbReference>
<dbReference type="InterPro" id="IPR004364">
    <property type="entry name" value="Aa-tRNA-synt_II"/>
</dbReference>
<dbReference type="InterPro" id="IPR006195">
    <property type="entry name" value="aa-tRNA-synth_II"/>
</dbReference>
<dbReference type="InterPro" id="IPR045864">
    <property type="entry name" value="aa-tRNA-synth_II/BPL/LPL"/>
</dbReference>
<dbReference type="InterPro" id="IPR004522">
    <property type="entry name" value="Asn-tRNA-ligase"/>
</dbReference>
<dbReference type="InterPro" id="IPR002312">
    <property type="entry name" value="Asp/Asn-tRNA-synth_IIb"/>
</dbReference>
<dbReference type="InterPro" id="IPR012340">
    <property type="entry name" value="NA-bd_OB-fold"/>
</dbReference>
<dbReference type="InterPro" id="IPR004365">
    <property type="entry name" value="NA-bd_OB_tRNA"/>
</dbReference>
<dbReference type="NCBIfam" id="TIGR00457">
    <property type="entry name" value="asnS"/>
    <property type="match status" value="1"/>
</dbReference>
<dbReference type="NCBIfam" id="NF003037">
    <property type="entry name" value="PRK03932.1"/>
    <property type="match status" value="1"/>
</dbReference>
<dbReference type="PANTHER" id="PTHR22594:SF34">
    <property type="entry name" value="ASPARAGINE--TRNA LIGASE, MITOCHONDRIAL-RELATED"/>
    <property type="match status" value="1"/>
</dbReference>
<dbReference type="PANTHER" id="PTHR22594">
    <property type="entry name" value="ASPARTYL/LYSYL-TRNA SYNTHETASE"/>
    <property type="match status" value="1"/>
</dbReference>
<dbReference type="Pfam" id="PF00152">
    <property type="entry name" value="tRNA-synt_2"/>
    <property type="match status" value="1"/>
</dbReference>
<dbReference type="Pfam" id="PF01336">
    <property type="entry name" value="tRNA_anti-codon"/>
    <property type="match status" value="1"/>
</dbReference>
<dbReference type="PRINTS" id="PR01042">
    <property type="entry name" value="TRNASYNTHASP"/>
</dbReference>
<dbReference type="SUPFAM" id="SSF55681">
    <property type="entry name" value="Class II aaRS and biotin synthetases"/>
    <property type="match status" value="1"/>
</dbReference>
<dbReference type="SUPFAM" id="SSF50249">
    <property type="entry name" value="Nucleic acid-binding proteins"/>
    <property type="match status" value="1"/>
</dbReference>
<dbReference type="PROSITE" id="PS50862">
    <property type="entry name" value="AA_TRNA_LIGASE_II"/>
    <property type="match status" value="1"/>
</dbReference>
<reference key="1">
    <citation type="journal article" date="2007" name="Genome Biol.">
        <title>Characterization and modeling of the Haemophilus influenzae core and supragenomes based on the complete genomic sequences of Rd and 12 clinical nontypeable strains.</title>
        <authorList>
            <person name="Hogg J.S."/>
            <person name="Hu F.Z."/>
            <person name="Janto B."/>
            <person name="Boissy R."/>
            <person name="Hayes J."/>
            <person name="Keefe R."/>
            <person name="Post J.C."/>
            <person name="Ehrlich G.D."/>
        </authorList>
    </citation>
    <scope>NUCLEOTIDE SEQUENCE [LARGE SCALE GENOMIC DNA]</scope>
    <source>
        <strain>PittEE</strain>
    </source>
</reference>
<protein>
    <recommendedName>
        <fullName evidence="1">Asparagine--tRNA ligase</fullName>
        <ecNumber evidence="1">6.1.1.22</ecNumber>
    </recommendedName>
    <alternativeName>
        <fullName evidence="1">Asparaginyl-tRNA synthetase</fullName>
        <shortName evidence="1">AsnRS</shortName>
    </alternativeName>
</protein>
<comment type="catalytic activity">
    <reaction evidence="1">
        <text>tRNA(Asn) + L-asparagine + ATP = L-asparaginyl-tRNA(Asn) + AMP + diphosphate + H(+)</text>
        <dbReference type="Rhea" id="RHEA:11180"/>
        <dbReference type="Rhea" id="RHEA-COMP:9659"/>
        <dbReference type="Rhea" id="RHEA-COMP:9674"/>
        <dbReference type="ChEBI" id="CHEBI:15378"/>
        <dbReference type="ChEBI" id="CHEBI:30616"/>
        <dbReference type="ChEBI" id="CHEBI:33019"/>
        <dbReference type="ChEBI" id="CHEBI:58048"/>
        <dbReference type="ChEBI" id="CHEBI:78442"/>
        <dbReference type="ChEBI" id="CHEBI:78515"/>
        <dbReference type="ChEBI" id="CHEBI:456215"/>
        <dbReference type="EC" id="6.1.1.22"/>
    </reaction>
</comment>
<comment type="subunit">
    <text evidence="1">Homodimer.</text>
</comment>
<comment type="subcellular location">
    <subcellularLocation>
        <location evidence="1">Cytoplasm</location>
    </subcellularLocation>
</comment>
<comment type="similarity">
    <text evidence="1">Belongs to the class-II aminoacyl-tRNA synthetase family.</text>
</comment>
<feature type="chain" id="PRO_1000051396" description="Asparagine--tRNA ligase">
    <location>
        <begin position="1"/>
        <end position="467"/>
    </location>
</feature>
<name>SYN_HAEIE</name>
<evidence type="ECO:0000255" key="1">
    <source>
        <dbReference type="HAMAP-Rule" id="MF_00534"/>
    </source>
</evidence>
<sequence>MSKVASIVDVLQGKVAIGETVTVRGWVRTRRDSKAGLSFLAVYDGSCFDPIQAIINNDIKNYESEILRLTTGCSVIVTGKVVESPSEGQAVELQAEKVEVTGFVEDPDTYPMAAKRHSIEYLREVAHLRPRTNIIGAVSRVRHCLSQAIHRFFHEQGFYWVATPLITASDTEGAGEMFRVSTLDLENLPRSENGKVDFSQDFFGKESFLTVSGQLNGETYACALSKIYTFGPTFRAENSNTTRHLAEFWMVEPEVAFATLADNAKLAEDMLKYVFRAVLAERKDDLQFFEKHVDKDVITRLENFVNSDFAQIDYTDAIDVLLKSGKKFEFPVSWGIDLSSEHERFLAEEYFKSPVVVKNYPKDIKAFYMRLNDDGKTVAAMDVLAPGIGEIIGGSQREERLEVLDKRMEEMGLNPDDYWWYRDLRKYGSVPHSGFGLGFERLIVYVTGVQNIRDVIPFPRAPRNANF</sequence>